<gene>
    <name evidence="1" type="primary">gcvH</name>
    <name type="ordered locus">blr5752</name>
</gene>
<dbReference type="EMBL" id="BA000040">
    <property type="protein sequence ID" value="BAC51017.1"/>
    <property type="molecule type" value="Genomic_DNA"/>
</dbReference>
<dbReference type="RefSeq" id="NP_772392.1">
    <property type="nucleotide sequence ID" value="NC_004463.1"/>
</dbReference>
<dbReference type="RefSeq" id="WP_011088496.1">
    <property type="nucleotide sequence ID" value="NC_004463.1"/>
</dbReference>
<dbReference type="SMR" id="Q89I87"/>
<dbReference type="FunCoup" id="Q89I87">
    <property type="interactions" value="700"/>
</dbReference>
<dbReference type="STRING" id="224911.AAV28_26270"/>
<dbReference type="EnsemblBacteria" id="BAC51017">
    <property type="protein sequence ID" value="BAC51017"/>
    <property type="gene ID" value="BAC51017"/>
</dbReference>
<dbReference type="GeneID" id="46492753"/>
<dbReference type="KEGG" id="bja:blr5752"/>
<dbReference type="PATRIC" id="fig|224911.44.peg.5685"/>
<dbReference type="eggNOG" id="COG0509">
    <property type="taxonomic scope" value="Bacteria"/>
</dbReference>
<dbReference type="HOGENOM" id="CLU_097408_2_0_5"/>
<dbReference type="InParanoid" id="Q89I87"/>
<dbReference type="OrthoDB" id="9796712at2"/>
<dbReference type="PhylomeDB" id="Q89I87"/>
<dbReference type="Proteomes" id="UP000002526">
    <property type="component" value="Chromosome"/>
</dbReference>
<dbReference type="GO" id="GO:0005829">
    <property type="term" value="C:cytosol"/>
    <property type="evidence" value="ECO:0000318"/>
    <property type="project" value="GO_Central"/>
</dbReference>
<dbReference type="GO" id="GO:0005960">
    <property type="term" value="C:glycine cleavage complex"/>
    <property type="evidence" value="ECO:0007669"/>
    <property type="project" value="InterPro"/>
</dbReference>
<dbReference type="GO" id="GO:0019464">
    <property type="term" value="P:glycine decarboxylation via glycine cleavage system"/>
    <property type="evidence" value="ECO:0007669"/>
    <property type="project" value="UniProtKB-UniRule"/>
</dbReference>
<dbReference type="CDD" id="cd06848">
    <property type="entry name" value="GCS_H"/>
    <property type="match status" value="1"/>
</dbReference>
<dbReference type="Gene3D" id="2.40.50.100">
    <property type="match status" value="1"/>
</dbReference>
<dbReference type="HAMAP" id="MF_00272">
    <property type="entry name" value="GcvH"/>
    <property type="match status" value="1"/>
</dbReference>
<dbReference type="InterPro" id="IPR003016">
    <property type="entry name" value="2-oxoA_DH_lipoyl-BS"/>
</dbReference>
<dbReference type="InterPro" id="IPR000089">
    <property type="entry name" value="Biotin_lipoyl"/>
</dbReference>
<dbReference type="InterPro" id="IPR002930">
    <property type="entry name" value="GCV_H"/>
</dbReference>
<dbReference type="InterPro" id="IPR033753">
    <property type="entry name" value="GCV_H/Fam206"/>
</dbReference>
<dbReference type="InterPro" id="IPR017453">
    <property type="entry name" value="GCV_H_sub"/>
</dbReference>
<dbReference type="InterPro" id="IPR011053">
    <property type="entry name" value="Single_hybrid_motif"/>
</dbReference>
<dbReference type="NCBIfam" id="TIGR00527">
    <property type="entry name" value="gcvH"/>
    <property type="match status" value="1"/>
</dbReference>
<dbReference type="NCBIfam" id="NF002270">
    <property type="entry name" value="PRK01202.1"/>
    <property type="match status" value="1"/>
</dbReference>
<dbReference type="PANTHER" id="PTHR11715">
    <property type="entry name" value="GLYCINE CLEAVAGE SYSTEM H PROTEIN"/>
    <property type="match status" value="1"/>
</dbReference>
<dbReference type="PANTHER" id="PTHR11715:SF3">
    <property type="entry name" value="GLYCINE CLEAVAGE SYSTEM H PROTEIN-RELATED"/>
    <property type="match status" value="1"/>
</dbReference>
<dbReference type="Pfam" id="PF01597">
    <property type="entry name" value="GCV_H"/>
    <property type="match status" value="1"/>
</dbReference>
<dbReference type="SUPFAM" id="SSF51230">
    <property type="entry name" value="Single hybrid motif"/>
    <property type="match status" value="1"/>
</dbReference>
<dbReference type="PROSITE" id="PS50968">
    <property type="entry name" value="BIOTINYL_LIPOYL"/>
    <property type="match status" value="1"/>
</dbReference>
<dbReference type="PROSITE" id="PS00189">
    <property type="entry name" value="LIPOYL"/>
    <property type="match status" value="1"/>
</dbReference>
<feature type="chain" id="PRO_0000166208" description="Glycine cleavage system H protein">
    <location>
        <begin position="1"/>
        <end position="122"/>
    </location>
</feature>
<feature type="domain" description="Lipoyl-binding" evidence="2">
    <location>
        <begin position="19"/>
        <end position="101"/>
    </location>
</feature>
<feature type="modified residue" description="N6-lipoyllysine" evidence="1">
    <location>
        <position position="60"/>
    </location>
</feature>
<keyword id="KW-0450">Lipoyl</keyword>
<keyword id="KW-1185">Reference proteome</keyword>
<evidence type="ECO:0000255" key="1">
    <source>
        <dbReference type="HAMAP-Rule" id="MF_00272"/>
    </source>
</evidence>
<evidence type="ECO:0000255" key="2">
    <source>
        <dbReference type="PROSITE-ProRule" id="PRU01066"/>
    </source>
</evidence>
<reference key="1">
    <citation type="journal article" date="2002" name="DNA Res.">
        <title>Complete genomic sequence of nitrogen-fixing symbiotic bacterium Bradyrhizobium japonicum USDA110.</title>
        <authorList>
            <person name="Kaneko T."/>
            <person name="Nakamura Y."/>
            <person name="Sato S."/>
            <person name="Minamisawa K."/>
            <person name="Uchiumi T."/>
            <person name="Sasamoto S."/>
            <person name="Watanabe A."/>
            <person name="Idesawa K."/>
            <person name="Iriguchi M."/>
            <person name="Kawashima K."/>
            <person name="Kohara M."/>
            <person name="Matsumoto M."/>
            <person name="Shimpo S."/>
            <person name="Tsuruoka H."/>
            <person name="Wada T."/>
            <person name="Yamada M."/>
            <person name="Tabata S."/>
        </authorList>
    </citation>
    <scope>NUCLEOTIDE SEQUENCE [LARGE SCALE GENOMIC DNA]</scope>
    <source>
        <strain>JCM 10833 / BCRC 13528 / IAM 13628 / NBRC 14792 / USDA 110</strain>
    </source>
</reference>
<protein>
    <recommendedName>
        <fullName evidence="1">Glycine cleavage system H protein</fullName>
    </recommendedName>
</protein>
<sequence length="122" mass="12916">MTTTLYTSDHEWLAIEGDVATVGITDYAQSQLGDVVFIELPKLGRALKKAEAAAVVESVKAASDVYAPVTGEVLETNDALAAEPALVNSDAQGKAWFFKIKIADKSELGGLMDEAAYKAHTA</sequence>
<accession>Q89I87</accession>
<proteinExistence type="inferred from homology"/>
<organism>
    <name type="scientific">Bradyrhizobium diazoefficiens (strain JCM 10833 / BCRC 13528 / IAM 13628 / NBRC 14792 / USDA 110)</name>
    <dbReference type="NCBI Taxonomy" id="224911"/>
    <lineage>
        <taxon>Bacteria</taxon>
        <taxon>Pseudomonadati</taxon>
        <taxon>Pseudomonadota</taxon>
        <taxon>Alphaproteobacteria</taxon>
        <taxon>Hyphomicrobiales</taxon>
        <taxon>Nitrobacteraceae</taxon>
        <taxon>Bradyrhizobium</taxon>
    </lineage>
</organism>
<comment type="function">
    <text evidence="1">The glycine cleavage system catalyzes the degradation of glycine. The H protein shuttles the methylamine group of glycine from the P protein to the T protein.</text>
</comment>
<comment type="cofactor">
    <cofactor evidence="1">
        <name>(R)-lipoate</name>
        <dbReference type="ChEBI" id="CHEBI:83088"/>
    </cofactor>
    <text evidence="1">Binds 1 lipoyl cofactor covalently.</text>
</comment>
<comment type="subunit">
    <text evidence="1">The glycine cleavage system is composed of four proteins: P, T, L and H.</text>
</comment>
<comment type="similarity">
    <text evidence="1">Belongs to the GcvH family.</text>
</comment>
<name>GCSH_BRADU</name>